<keyword id="KW-0496">Mitochondrion</keyword>
<keyword id="KW-0687">Ribonucleoprotein</keyword>
<keyword id="KW-0689">Ribosomal protein</keyword>
<evidence type="ECO:0000250" key="1"/>
<evidence type="ECO:0000305" key="2"/>
<accession>P48849</accession>
<proteinExistence type="inferred from homology"/>
<reference key="1">
    <citation type="journal article" date="1995" name="Curr. Genet.">
        <title>The complete mitochondrial DNA sequence of Hansenula wingei reveals new characteristics of yeast mitochondria.</title>
        <authorList>
            <person name="Sekito T."/>
            <person name="Okamoto K."/>
            <person name="Kitano H."/>
            <person name="Yoshida K."/>
        </authorList>
    </citation>
    <scope>NUCLEOTIDE SEQUENCE [LARGE SCALE GENOMIC DNA]</scope>
    <source>
        <strain>21</strain>
    </source>
</reference>
<sequence length="386" mass="44904">MKRINKDYLYKLTNNYIKNIDISIKDHYINEYNNKGTKLQRINKINSWDNQLYKFNKKNVINTWILDRLVSKLLIKIFKVRVNIINNNIINNGQIKDIYINKPKFKHTINKVYINFNYILSSNNITINDIDNNMNKYYTSIINDINNILGISNNNNNNIINKDNISNYLSKLYNKKVIIESNRLIYHYNDNTILNKMIINNMEKHKGGLSGKYSKILRTNIPVNNSILIRNKYISSIINNNYIKLNHIINLTSYNNLNILNIYNTLNLNKISKDLLINKYIIGLNVLYKGKNLNTAGISRSIKDRLLLGSLSNKLYGKYSNFLSSSLINNNNNNLKLGSSNINTNLNINKSYKLNYIPNHHNIITNNKVNKVKTGTFGITTKLNTI</sequence>
<feature type="chain" id="PRO_0000220070" description="Small ribosomal subunit protein uS3m">
    <location>
        <begin position="1"/>
        <end position="386"/>
    </location>
</feature>
<comment type="function">
    <text evidence="1">Essential for mitochondrial protein synthesis and required for the maturation of small ribosomal subunits.</text>
</comment>
<comment type="subcellular location">
    <subcellularLocation>
        <location>Mitochondrion</location>
    </subcellularLocation>
</comment>
<comment type="similarity">
    <text evidence="2">Belongs to the universal ribosomal protein uS3 family.</text>
</comment>
<gene>
    <name type="primary">VAR1</name>
</gene>
<dbReference type="EMBL" id="D31785">
    <property type="protein sequence ID" value="BAA06578.2"/>
    <property type="molecule type" value="Genomic_DNA"/>
</dbReference>
<dbReference type="PIR" id="S58755">
    <property type="entry name" value="S58755"/>
</dbReference>
<dbReference type="RefSeq" id="NP_038223.1">
    <property type="nucleotide sequence ID" value="NC_001762.1"/>
</dbReference>
<dbReference type="SMR" id="P48849"/>
<dbReference type="GeneID" id="800557"/>
<dbReference type="GO" id="GO:0005739">
    <property type="term" value="C:mitochondrion"/>
    <property type="evidence" value="ECO:0007669"/>
    <property type="project" value="UniProtKB-SubCell"/>
</dbReference>
<dbReference type="GO" id="GO:1990904">
    <property type="term" value="C:ribonucleoprotein complex"/>
    <property type="evidence" value="ECO:0007669"/>
    <property type="project" value="UniProtKB-KW"/>
</dbReference>
<dbReference type="GO" id="GO:0005840">
    <property type="term" value="C:ribosome"/>
    <property type="evidence" value="ECO:0007669"/>
    <property type="project" value="UniProtKB-KW"/>
</dbReference>
<organism>
    <name type="scientific">Wickerhamomyces canadensis</name>
    <name type="common">Yeast</name>
    <name type="synonym">Pichia canadensis</name>
    <dbReference type="NCBI Taxonomy" id="1156965"/>
    <lineage>
        <taxon>Eukaryota</taxon>
        <taxon>Fungi</taxon>
        <taxon>Dikarya</taxon>
        <taxon>Ascomycota</taxon>
        <taxon>Saccharomycotina</taxon>
        <taxon>Saccharomycetes</taxon>
        <taxon>Phaffomycetales</taxon>
        <taxon>Wickerhamomycetaceae</taxon>
        <taxon>Wickerhamomyces</taxon>
    </lineage>
</organism>
<geneLocation type="mitochondrion"/>
<protein>
    <recommendedName>
        <fullName evidence="2">Small ribosomal subunit protein uS3m</fullName>
    </recommendedName>
    <alternativeName>
        <fullName>Ribosomal protein VAR1, mitochondrial</fullName>
    </alternativeName>
</protein>
<name>RMAR_WICCA</name>